<reference key="1">
    <citation type="submission" date="2008-04" db="EMBL/GenBank/DDBJ databases">
        <title>Complete sequence of chromosome of Exiguobacterium sibiricum 255-15.</title>
        <authorList>
            <consortium name="US DOE Joint Genome Institute"/>
            <person name="Copeland A."/>
            <person name="Lucas S."/>
            <person name="Lapidus A."/>
            <person name="Glavina del Rio T."/>
            <person name="Dalin E."/>
            <person name="Tice H."/>
            <person name="Bruce D."/>
            <person name="Goodwin L."/>
            <person name="Pitluck S."/>
            <person name="Kiss H."/>
            <person name="Chertkov O."/>
            <person name="Monk C."/>
            <person name="Brettin T."/>
            <person name="Detter J.C."/>
            <person name="Han C."/>
            <person name="Kuske C.R."/>
            <person name="Schmutz J."/>
            <person name="Larimer F."/>
            <person name="Land M."/>
            <person name="Hauser L."/>
            <person name="Kyrpides N."/>
            <person name="Mikhailova N."/>
            <person name="Vishnivetskaya T."/>
            <person name="Rodrigues D.F."/>
            <person name="Gilichinsky D."/>
            <person name="Tiedje J."/>
            <person name="Richardson P."/>
        </authorList>
    </citation>
    <scope>NUCLEOTIDE SEQUENCE [LARGE SCALE GENOMIC DNA]</scope>
    <source>
        <strain>DSM 17290 / CCUG 55495 / CIP 109462 / JCM 13490 / 255-15</strain>
    </source>
</reference>
<name>CH60_EXIS2</name>
<comment type="function">
    <text evidence="1">Together with its co-chaperonin GroES, plays an essential role in assisting protein folding. The GroEL-GroES system forms a nano-cage that allows encapsulation of the non-native substrate proteins and provides a physical environment optimized to promote and accelerate protein folding.</text>
</comment>
<comment type="catalytic activity">
    <reaction evidence="1">
        <text>ATP + H2O + a folded polypeptide = ADP + phosphate + an unfolded polypeptide.</text>
        <dbReference type="EC" id="5.6.1.7"/>
    </reaction>
</comment>
<comment type="subunit">
    <text evidence="1">Forms a cylinder of 14 subunits composed of two heptameric rings stacked back-to-back. Interacts with the co-chaperonin GroES.</text>
</comment>
<comment type="subcellular location">
    <subcellularLocation>
        <location evidence="1">Cytoplasm</location>
    </subcellularLocation>
</comment>
<comment type="similarity">
    <text evidence="1">Belongs to the chaperonin (HSP60) family.</text>
</comment>
<evidence type="ECO:0000255" key="1">
    <source>
        <dbReference type="HAMAP-Rule" id="MF_00600"/>
    </source>
</evidence>
<feature type="chain" id="PRO_1000130017" description="Chaperonin GroEL">
    <location>
        <begin position="1"/>
        <end position="545"/>
    </location>
</feature>
<feature type="binding site" evidence="1">
    <location>
        <begin position="29"/>
        <end position="32"/>
    </location>
    <ligand>
        <name>ATP</name>
        <dbReference type="ChEBI" id="CHEBI:30616"/>
    </ligand>
</feature>
<feature type="binding site" evidence="1">
    <location>
        <begin position="86"/>
        <end position="90"/>
    </location>
    <ligand>
        <name>ATP</name>
        <dbReference type="ChEBI" id="CHEBI:30616"/>
    </ligand>
</feature>
<feature type="binding site" evidence="1">
    <location>
        <position position="413"/>
    </location>
    <ligand>
        <name>ATP</name>
        <dbReference type="ChEBI" id="CHEBI:30616"/>
    </ligand>
</feature>
<feature type="binding site" evidence="1">
    <location>
        <begin position="478"/>
        <end position="480"/>
    </location>
    <ligand>
        <name>ATP</name>
        <dbReference type="ChEBI" id="CHEBI:30616"/>
    </ligand>
</feature>
<feature type="binding site" evidence="1">
    <location>
        <position position="494"/>
    </location>
    <ligand>
        <name>ATP</name>
        <dbReference type="ChEBI" id="CHEBI:30616"/>
    </ligand>
</feature>
<keyword id="KW-0067">ATP-binding</keyword>
<keyword id="KW-0143">Chaperone</keyword>
<keyword id="KW-0963">Cytoplasm</keyword>
<keyword id="KW-0413">Isomerase</keyword>
<keyword id="KW-0547">Nucleotide-binding</keyword>
<keyword id="KW-1185">Reference proteome</keyword>
<organism>
    <name type="scientific">Exiguobacterium sibiricum (strain DSM 17290 / CCUG 55495 / CIP 109462 / JCM 13490 / 255-15)</name>
    <dbReference type="NCBI Taxonomy" id="262543"/>
    <lineage>
        <taxon>Bacteria</taxon>
        <taxon>Bacillati</taxon>
        <taxon>Bacillota</taxon>
        <taxon>Bacilli</taxon>
        <taxon>Bacillales</taxon>
        <taxon>Bacillales Family XII. Incertae Sedis</taxon>
        <taxon>Exiguobacterium</taxon>
    </lineage>
</organism>
<sequence>MAKDILFSEEARRAMLRGVDALADAVKVTIGPKGRNVVLERKFGSPLITNDGVTIAKEIELEDHFENMGAKLVAEVASKTNEIAGDGTTTATVLAQAMIREGLKNVTAGANPMVIRKGIEKAVRRAVEELHAIAKPIEGKEAIAQVAAISAADEEVGQLIAEAMERVGQDGVITIEESRGFTTELDVVEGMQFDRGYASPYMITDSDKMEAVLENPYILITDKKISNIQEILPVLEQVVQQNKPLLIIAEDVEGEALATLVVNKLRGTFNAVAVKAPGFGDRRKAMLEDISIVTGAELITEELGLDLKETQITQLGRASKVVVSKDNTTIVEGNGHSDSITARVGAIRSQIEETTSDFDREKLQERLAKLAGGVAVVKVGAATETELKERKLRIEDALNATRAAVEEGIVAGGGTAFIHVTKAVESILAVTTGDEATGVNIVLRALEAPLRQIAENAGQEGSVIVERLKHEAQGMGYNAATDEYVDMIETGIVDPAKVTRSALQNAASVSAMFLTTEAVIADKPEPAGAPAMPDMGGMGGMGGMM</sequence>
<gene>
    <name evidence="1" type="primary">groEL</name>
    <name evidence="1" type="synonym">groL</name>
    <name type="ordered locus">Exig_2768</name>
</gene>
<accession>B1YEP6</accession>
<protein>
    <recommendedName>
        <fullName evidence="1">Chaperonin GroEL</fullName>
        <ecNumber evidence="1">5.6.1.7</ecNumber>
    </recommendedName>
    <alternativeName>
        <fullName evidence="1">60 kDa chaperonin</fullName>
    </alternativeName>
    <alternativeName>
        <fullName evidence="1">Chaperonin-60</fullName>
        <shortName evidence="1">Cpn60</shortName>
    </alternativeName>
</protein>
<dbReference type="EC" id="5.6.1.7" evidence="1"/>
<dbReference type="EMBL" id="CP001022">
    <property type="protein sequence ID" value="ACB62214.1"/>
    <property type="molecule type" value="Genomic_DNA"/>
</dbReference>
<dbReference type="RefSeq" id="WP_012371630.1">
    <property type="nucleotide sequence ID" value="NC_010556.1"/>
</dbReference>
<dbReference type="SMR" id="B1YEP6"/>
<dbReference type="STRING" id="262543.Exig_2768"/>
<dbReference type="KEGG" id="esi:Exig_2768"/>
<dbReference type="eggNOG" id="COG0459">
    <property type="taxonomic scope" value="Bacteria"/>
</dbReference>
<dbReference type="HOGENOM" id="CLU_016503_3_0_9"/>
<dbReference type="OrthoDB" id="9766614at2"/>
<dbReference type="Proteomes" id="UP000001681">
    <property type="component" value="Chromosome"/>
</dbReference>
<dbReference type="GO" id="GO:0005737">
    <property type="term" value="C:cytoplasm"/>
    <property type="evidence" value="ECO:0007669"/>
    <property type="project" value="UniProtKB-SubCell"/>
</dbReference>
<dbReference type="GO" id="GO:0005524">
    <property type="term" value="F:ATP binding"/>
    <property type="evidence" value="ECO:0007669"/>
    <property type="project" value="UniProtKB-UniRule"/>
</dbReference>
<dbReference type="GO" id="GO:0140662">
    <property type="term" value="F:ATP-dependent protein folding chaperone"/>
    <property type="evidence" value="ECO:0007669"/>
    <property type="project" value="InterPro"/>
</dbReference>
<dbReference type="GO" id="GO:0016853">
    <property type="term" value="F:isomerase activity"/>
    <property type="evidence" value="ECO:0007669"/>
    <property type="project" value="UniProtKB-KW"/>
</dbReference>
<dbReference type="GO" id="GO:0051082">
    <property type="term" value="F:unfolded protein binding"/>
    <property type="evidence" value="ECO:0007669"/>
    <property type="project" value="UniProtKB-UniRule"/>
</dbReference>
<dbReference type="GO" id="GO:0042026">
    <property type="term" value="P:protein refolding"/>
    <property type="evidence" value="ECO:0007669"/>
    <property type="project" value="UniProtKB-UniRule"/>
</dbReference>
<dbReference type="CDD" id="cd03344">
    <property type="entry name" value="GroEL"/>
    <property type="match status" value="1"/>
</dbReference>
<dbReference type="FunFam" id="1.10.560.10:FF:000001">
    <property type="entry name" value="60 kDa chaperonin"/>
    <property type="match status" value="1"/>
</dbReference>
<dbReference type="FunFam" id="3.50.7.10:FF:000001">
    <property type="entry name" value="60 kDa chaperonin"/>
    <property type="match status" value="1"/>
</dbReference>
<dbReference type="Gene3D" id="3.50.7.10">
    <property type="entry name" value="GroEL"/>
    <property type="match status" value="1"/>
</dbReference>
<dbReference type="Gene3D" id="1.10.560.10">
    <property type="entry name" value="GroEL-like equatorial domain"/>
    <property type="match status" value="1"/>
</dbReference>
<dbReference type="Gene3D" id="3.30.260.10">
    <property type="entry name" value="TCP-1-like chaperonin intermediate domain"/>
    <property type="match status" value="1"/>
</dbReference>
<dbReference type="HAMAP" id="MF_00600">
    <property type="entry name" value="CH60"/>
    <property type="match status" value="1"/>
</dbReference>
<dbReference type="InterPro" id="IPR018370">
    <property type="entry name" value="Chaperonin_Cpn60_CS"/>
</dbReference>
<dbReference type="InterPro" id="IPR001844">
    <property type="entry name" value="Cpn60/GroEL"/>
</dbReference>
<dbReference type="InterPro" id="IPR002423">
    <property type="entry name" value="Cpn60/GroEL/TCP-1"/>
</dbReference>
<dbReference type="InterPro" id="IPR027409">
    <property type="entry name" value="GroEL-like_apical_dom_sf"/>
</dbReference>
<dbReference type="InterPro" id="IPR027413">
    <property type="entry name" value="GROEL-like_equatorial_sf"/>
</dbReference>
<dbReference type="InterPro" id="IPR027410">
    <property type="entry name" value="TCP-1-like_intermed_sf"/>
</dbReference>
<dbReference type="NCBIfam" id="TIGR02348">
    <property type="entry name" value="GroEL"/>
    <property type="match status" value="1"/>
</dbReference>
<dbReference type="NCBIfam" id="NF000592">
    <property type="entry name" value="PRK00013.1"/>
    <property type="match status" value="1"/>
</dbReference>
<dbReference type="NCBIfam" id="NF009487">
    <property type="entry name" value="PRK12849.1"/>
    <property type="match status" value="1"/>
</dbReference>
<dbReference type="NCBIfam" id="NF009488">
    <property type="entry name" value="PRK12850.1"/>
    <property type="match status" value="1"/>
</dbReference>
<dbReference type="NCBIfam" id="NF009489">
    <property type="entry name" value="PRK12851.1"/>
    <property type="match status" value="1"/>
</dbReference>
<dbReference type="PANTHER" id="PTHR45633">
    <property type="entry name" value="60 KDA HEAT SHOCK PROTEIN, MITOCHONDRIAL"/>
    <property type="match status" value="1"/>
</dbReference>
<dbReference type="Pfam" id="PF00118">
    <property type="entry name" value="Cpn60_TCP1"/>
    <property type="match status" value="1"/>
</dbReference>
<dbReference type="PRINTS" id="PR00298">
    <property type="entry name" value="CHAPERONIN60"/>
</dbReference>
<dbReference type="SUPFAM" id="SSF52029">
    <property type="entry name" value="GroEL apical domain-like"/>
    <property type="match status" value="1"/>
</dbReference>
<dbReference type="SUPFAM" id="SSF48592">
    <property type="entry name" value="GroEL equatorial domain-like"/>
    <property type="match status" value="1"/>
</dbReference>
<dbReference type="SUPFAM" id="SSF54849">
    <property type="entry name" value="GroEL-intermediate domain like"/>
    <property type="match status" value="1"/>
</dbReference>
<dbReference type="PROSITE" id="PS00296">
    <property type="entry name" value="CHAPERONINS_CPN60"/>
    <property type="match status" value="1"/>
</dbReference>
<proteinExistence type="inferred from homology"/>